<name>HYD5_FLAVE</name>
<comment type="function">
    <text evidence="6">Aerial growth, conidiation, and dispersal of filamentous fungi in the environment rely upon a capability of their secreting small amphipathic proteins called hydrophobins (HPBs) with low sequence identity. Class I can self-assemble into an outermost layer of rodlet bundles on aerial cell surfaces, conferring cellular hydrophobicity that supports fungal growth, development and dispersal; whereas Class II form highly ordered films at water-air interfaces through intermolecular interactions but contribute nothing to the rodlet structure.</text>
</comment>
<comment type="subunit">
    <text evidence="1">Self-assembles to form functional amyloid fibrils called rodlets. Self-assembly into fibrillar rodlets occurs spontaneously at hydrophobic:hydrophilic interfaces and the rodlets further associate laterally to form amphipathic monolayers.</text>
</comment>
<comment type="subcellular location">
    <subcellularLocation>
        <location evidence="1">Secreted</location>
    </subcellularLocation>
    <subcellularLocation>
        <location evidence="1">Secreted</location>
        <location evidence="1">Cell wall</location>
    </subcellularLocation>
</comment>
<comment type="developmental stage">
    <text evidence="4">Shows relatively higher levels of expression in the primordial stages and relatively low levels in the mycelial stage.</text>
</comment>
<comment type="induction">
    <text evidence="4">A CT-rich motif, which is often found immediately upstream of the transcription start point of highly expressed filamentous fungal genes, is present at the expected position (Ref.1). Two additional CT-rich regions are also found upstream of the TATA box in the promoter region (Ref.1).</text>
</comment>
<comment type="similarity">
    <text evidence="6">Belongs to the fungal hydrophobin family.</text>
</comment>
<evidence type="ECO:0000250" key="1">
    <source>
        <dbReference type="UniProtKB" id="Q04571"/>
    </source>
</evidence>
<evidence type="ECO:0000255" key="2"/>
<evidence type="ECO:0000255" key="3">
    <source>
        <dbReference type="PROSITE-ProRule" id="PRU00498"/>
    </source>
</evidence>
<evidence type="ECO:0000269" key="4">
    <source ref="1"/>
</evidence>
<evidence type="ECO:0000303" key="5">
    <source ref="1"/>
</evidence>
<evidence type="ECO:0000305" key="6"/>
<reference key="1">
    <citation type="journal article" date="2016" name="Mycoscience">
        <title>Further characterization of hydrophobin genes in genome of Flammulina velutipes.</title>
        <authorList>
            <person name="Kim H.-I."/>
            <person name="Lee C.-S."/>
            <person name="Park Y.-J."/>
        </authorList>
    </citation>
    <scope>NUCLEOTIDE SEQUENCE [GENOMIC DNA]</scope>
    <scope>DEVELOPMENTAL STAGE</scope>
    <scope>INDUCTION</scope>
</reference>
<feature type="signal peptide" evidence="2">
    <location>
        <begin position="1"/>
        <end position="17"/>
    </location>
</feature>
<feature type="chain" id="PRO_5013985136" description="Class I hydrophobin 5">
    <location>
        <begin position="18"/>
        <end position="112"/>
    </location>
</feature>
<feature type="glycosylation site" description="N-linked (GlcNAc...) asparagine" evidence="3">
    <location>
        <position position="96"/>
    </location>
</feature>
<feature type="disulfide bond" evidence="1">
    <location>
        <begin position="33"/>
        <end position="93"/>
    </location>
</feature>
<feature type="disulfide bond" evidence="1">
    <location>
        <begin position="40"/>
        <end position="87"/>
    </location>
</feature>
<feature type="disulfide bond" evidence="1">
    <location>
        <begin position="41"/>
        <end position="74"/>
    </location>
</feature>
<feature type="disulfide bond" evidence="1">
    <location>
        <begin position="94"/>
        <end position="107"/>
    </location>
</feature>
<proteinExistence type="evidence at transcript level"/>
<keyword id="KW-0134">Cell wall</keyword>
<keyword id="KW-1015">Disulfide bond</keyword>
<keyword id="KW-0325">Glycoprotein</keyword>
<keyword id="KW-0964">Secreted</keyword>
<keyword id="KW-0732">Signal</keyword>
<gene>
    <name evidence="5" type="primary">Hyd-5</name>
</gene>
<dbReference type="EMBL" id="KT868837">
    <property type="protein sequence ID" value="AOV80985.1"/>
    <property type="molecule type" value="Genomic_DNA"/>
</dbReference>
<dbReference type="SMR" id="A0A1I9QLC6"/>
<dbReference type="GO" id="GO:0005576">
    <property type="term" value="C:extracellular region"/>
    <property type="evidence" value="ECO:0007669"/>
    <property type="project" value="UniProtKB-KW"/>
</dbReference>
<dbReference type="GO" id="GO:0009277">
    <property type="term" value="C:fungal-type cell wall"/>
    <property type="evidence" value="ECO:0007669"/>
    <property type="project" value="InterPro"/>
</dbReference>
<dbReference type="GO" id="GO:0005199">
    <property type="term" value="F:structural constituent of cell wall"/>
    <property type="evidence" value="ECO:0007669"/>
    <property type="project" value="InterPro"/>
</dbReference>
<dbReference type="CDD" id="cd23507">
    <property type="entry name" value="hydrophobin_I"/>
    <property type="match status" value="1"/>
</dbReference>
<dbReference type="InterPro" id="IPR001338">
    <property type="entry name" value="Hydrophobin"/>
</dbReference>
<dbReference type="Pfam" id="PF01185">
    <property type="entry name" value="Hydrophobin"/>
    <property type="match status" value="1"/>
</dbReference>
<dbReference type="SMART" id="SM00075">
    <property type="entry name" value="HYDRO"/>
    <property type="match status" value="1"/>
</dbReference>
<organism>
    <name type="scientific">Flammulina velutipes</name>
    <name type="common">Agaricus velutipes</name>
    <dbReference type="NCBI Taxonomy" id="38945"/>
    <lineage>
        <taxon>Eukaryota</taxon>
        <taxon>Fungi</taxon>
        <taxon>Dikarya</taxon>
        <taxon>Basidiomycota</taxon>
        <taxon>Agaricomycotina</taxon>
        <taxon>Agaricomycetes</taxon>
        <taxon>Agaricomycetidae</taxon>
        <taxon>Agaricales</taxon>
        <taxon>Marasmiineae</taxon>
        <taxon>Physalacriaceae</taxon>
        <taxon>Flammulina</taxon>
    </lineage>
</organism>
<sequence length="112" mass="11082">MFSAAISVFVLATLTAATPMARGIIPAPPAGQCNVGTQQCCNSVQDASSDPAAGLLALLGINVQDVTGQVGLTCNPITVIGGVNSNCDASPVCCENNSFGSLISLGCVPVSL</sequence>
<accession>A0A1I9QLC6</accession>
<protein>
    <recommendedName>
        <fullName evidence="5">Class I hydrophobin 5</fullName>
    </recommendedName>
</protein>